<gene>
    <name type="ORF">AN4404</name>
</gene>
<sequence>MAAQASEKLEKLDLNGQNGESAAGPAKAGQADAGEVEDESDDDADDAGAAADGAANGAAKKKKKRKSKKKKKGGAKVQSSPPRVPVSSLFANGQYPEGEIVEYKNENSYRTTNEEKRYLDRMNNDFLQEYRQGAEVHRQVRQYAQKNIKPGQTLTEIAEGIEDSVRALTGHQGLEEGDNIKGGMGFPCGLSINHCAAHYTPNAGNKMVLQQGDVMKVDFGAHINGRIVDSAFTMSFDPVYDPLLEAVKDATNTGIRSLQEAGIDVRMSDIGAAIQETMESYEIELNGTTYPIKPIRNLNGHNIDQHVIHGGKSVPIVKGSDQTKMEEGEVFAIETFGSTGKGYVREDMETSHYALVANAPQVPLRLSSAKSLLNVINKNFGTLPWCRRYLDRLGQDKYLLGLNNLVQSGIVQDYPPLCDIKGSYTAQFEHTIVLRPTVKEVISRGDDY</sequence>
<name>MAP21_EMENI</name>
<protein>
    <recommendedName>
        <fullName evidence="1">Methionine aminopeptidase 2-1</fullName>
        <shortName evidence="1">MAP 2-1</shortName>
        <shortName evidence="1">MetAP 2-1</shortName>
        <ecNumber evidence="1">3.4.11.18</ecNumber>
    </recommendedName>
    <alternativeName>
        <fullName evidence="1">Peptidase M</fullName>
    </alternativeName>
</protein>
<dbReference type="EC" id="3.4.11.18" evidence="1"/>
<dbReference type="EMBL" id="AACD01000076">
    <property type="protein sequence ID" value="EAA60321.1"/>
    <property type="molecule type" value="Genomic_DNA"/>
</dbReference>
<dbReference type="EMBL" id="BN001303">
    <property type="protein sequence ID" value="CBF77596.1"/>
    <property type="molecule type" value="Genomic_DNA"/>
</dbReference>
<dbReference type="RefSeq" id="XP_662008.1">
    <property type="nucleotide sequence ID" value="XM_656916.1"/>
</dbReference>
<dbReference type="SMR" id="Q5B4X6"/>
<dbReference type="FunCoup" id="Q5B4X6">
    <property type="interactions" value="1149"/>
</dbReference>
<dbReference type="STRING" id="227321.Q5B4X6"/>
<dbReference type="MEROPS" id="M24.002"/>
<dbReference type="EnsemblFungi" id="CBF77596">
    <property type="protein sequence ID" value="CBF77596"/>
    <property type="gene ID" value="ANIA_04404"/>
</dbReference>
<dbReference type="KEGG" id="ani:ANIA_04404"/>
<dbReference type="eggNOG" id="KOG2775">
    <property type="taxonomic scope" value="Eukaryota"/>
</dbReference>
<dbReference type="HOGENOM" id="CLU_015857_7_1_1"/>
<dbReference type="InParanoid" id="Q5B4X6"/>
<dbReference type="OMA" id="PFAKRWL"/>
<dbReference type="OrthoDB" id="7848262at2759"/>
<dbReference type="Proteomes" id="UP000000560">
    <property type="component" value="Chromosome III"/>
</dbReference>
<dbReference type="GO" id="GO:0005737">
    <property type="term" value="C:cytoplasm"/>
    <property type="evidence" value="ECO:0000318"/>
    <property type="project" value="GO_Central"/>
</dbReference>
<dbReference type="GO" id="GO:0004177">
    <property type="term" value="F:aminopeptidase activity"/>
    <property type="evidence" value="ECO:0000318"/>
    <property type="project" value="GO_Central"/>
</dbReference>
<dbReference type="GO" id="GO:0004239">
    <property type="term" value="F:initiator methionyl aminopeptidase activity"/>
    <property type="evidence" value="ECO:0007669"/>
    <property type="project" value="UniProtKB-UniRule"/>
</dbReference>
<dbReference type="GO" id="GO:0046872">
    <property type="term" value="F:metal ion binding"/>
    <property type="evidence" value="ECO:0007669"/>
    <property type="project" value="UniProtKB-UniRule"/>
</dbReference>
<dbReference type="GO" id="GO:0070006">
    <property type="term" value="F:metalloaminopeptidase activity"/>
    <property type="evidence" value="ECO:0007669"/>
    <property type="project" value="UniProtKB-UniRule"/>
</dbReference>
<dbReference type="GO" id="GO:0008235">
    <property type="term" value="F:metalloexopeptidase activity"/>
    <property type="evidence" value="ECO:0000318"/>
    <property type="project" value="GO_Central"/>
</dbReference>
<dbReference type="GO" id="GO:0006508">
    <property type="term" value="P:proteolysis"/>
    <property type="evidence" value="ECO:0007669"/>
    <property type="project" value="UniProtKB-KW"/>
</dbReference>
<dbReference type="CDD" id="cd01088">
    <property type="entry name" value="MetAP2"/>
    <property type="match status" value="1"/>
</dbReference>
<dbReference type="Gene3D" id="3.90.230.10">
    <property type="entry name" value="Creatinase/methionine aminopeptidase superfamily"/>
    <property type="match status" value="1"/>
</dbReference>
<dbReference type="Gene3D" id="1.10.10.10">
    <property type="entry name" value="Winged helix-like DNA-binding domain superfamily/Winged helix DNA-binding domain"/>
    <property type="match status" value="1"/>
</dbReference>
<dbReference type="HAMAP" id="MF_03175">
    <property type="entry name" value="MetAP_2_euk"/>
    <property type="match status" value="1"/>
</dbReference>
<dbReference type="InterPro" id="IPR036005">
    <property type="entry name" value="Creatinase/aminopeptidase-like"/>
</dbReference>
<dbReference type="InterPro" id="IPR050247">
    <property type="entry name" value="Met_Aminopeptidase_Type2"/>
</dbReference>
<dbReference type="InterPro" id="IPR000994">
    <property type="entry name" value="Pept_M24"/>
</dbReference>
<dbReference type="InterPro" id="IPR001714">
    <property type="entry name" value="Pept_M24_MAP"/>
</dbReference>
<dbReference type="InterPro" id="IPR002468">
    <property type="entry name" value="Pept_M24A_MAP2"/>
</dbReference>
<dbReference type="InterPro" id="IPR018349">
    <property type="entry name" value="Pept_M24A_MAP2_BS"/>
</dbReference>
<dbReference type="InterPro" id="IPR036388">
    <property type="entry name" value="WH-like_DNA-bd_sf"/>
</dbReference>
<dbReference type="InterPro" id="IPR036390">
    <property type="entry name" value="WH_DNA-bd_sf"/>
</dbReference>
<dbReference type="NCBIfam" id="TIGR00501">
    <property type="entry name" value="met_pdase_II"/>
    <property type="match status" value="1"/>
</dbReference>
<dbReference type="PANTHER" id="PTHR45777">
    <property type="entry name" value="METHIONINE AMINOPEPTIDASE 2"/>
    <property type="match status" value="1"/>
</dbReference>
<dbReference type="PANTHER" id="PTHR45777:SF2">
    <property type="entry name" value="METHIONINE AMINOPEPTIDASE 2"/>
    <property type="match status" value="1"/>
</dbReference>
<dbReference type="Pfam" id="PF00557">
    <property type="entry name" value="Peptidase_M24"/>
    <property type="match status" value="1"/>
</dbReference>
<dbReference type="PRINTS" id="PR00599">
    <property type="entry name" value="MAPEPTIDASE"/>
</dbReference>
<dbReference type="SUPFAM" id="SSF55920">
    <property type="entry name" value="Creatinase/aminopeptidase"/>
    <property type="match status" value="1"/>
</dbReference>
<dbReference type="SUPFAM" id="SSF46785">
    <property type="entry name" value="Winged helix' DNA-binding domain"/>
    <property type="match status" value="1"/>
</dbReference>
<dbReference type="PROSITE" id="PS01202">
    <property type="entry name" value="MAP_2"/>
    <property type="match status" value="1"/>
</dbReference>
<reference key="1">
    <citation type="journal article" date="2005" name="Nature">
        <title>Sequencing of Aspergillus nidulans and comparative analysis with A. fumigatus and A. oryzae.</title>
        <authorList>
            <person name="Galagan J.E."/>
            <person name="Calvo S.E."/>
            <person name="Cuomo C."/>
            <person name="Ma L.-J."/>
            <person name="Wortman J.R."/>
            <person name="Batzoglou S."/>
            <person name="Lee S.-I."/>
            <person name="Bastuerkmen M."/>
            <person name="Spevak C.C."/>
            <person name="Clutterbuck J."/>
            <person name="Kapitonov V."/>
            <person name="Jurka J."/>
            <person name="Scazzocchio C."/>
            <person name="Farman M.L."/>
            <person name="Butler J."/>
            <person name="Purcell S."/>
            <person name="Harris S."/>
            <person name="Braus G.H."/>
            <person name="Draht O."/>
            <person name="Busch S."/>
            <person name="D'Enfert C."/>
            <person name="Bouchier C."/>
            <person name="Goldman G.H."/>
            <person name="Bell-Pedersen D."/>
            <person name="Griffiths-Jones S."/>
            <person name="Doonan J.H."/>
            <person name="Yu J."/>
            <person name="Vienken K."/>
            <person name="Pain A."/>
            <person name="Freitag M."/>
            <person name="Selker E.U."/>
            <person name="Archer D.B."/>
            <person name="Penalva M.A."/>
            <person name="Oakley B.R."/>
            <person name="Momany M."/>
            <person name="Tanaka T."/>
            <person name="Kumagai T."/>
            <person name="Asai K."/>
            <person name="Machida M."/>
            <person name="Nierman W.C."/>
            <person name="Denning D.W."/>
            <person name="Caddick M.X."/>
            <person name="Hynes M."/>
            <person name="Paoletti M."/>
            <person name="Fischer R."/>
            <person name="Miller B.L."/>
            <person name="Dyer P.S."/>
            <person name="Sachs M.S."/>
            <person name="Osmani S.A."/>
            <person name="Birren B.W."/>
        </authorList>
    </citation>
    <scope>NUCLEOTIDE SEQUENCE [LARGE SCALE GENOMIC DNA]</scope>
    <source>
        <strain>FGSC A4 / ATCC 38163 / CBS 112.46 / NRRL 194 / M139</strain>
    </source>
</reference>
<reference key="2">
    <citation type="journal article" date="2009" name="Fungal Genet. Biol.">
        <title>The 2008 update of the Aspergillus nidulans genome annotation: a community effort.</title>
        <authorList>
            <person name="Wortman J.R."/>
            <person name="Gilsenan J.M."/>
            <person name="Joardar V."/>
            <person name="Deegan J."/>
            <person name="Clutterbuck J."/>
            <person name="Andersen M.R."/>
            <person name="Archer D."/>
            <person name="Bencina M."/>
            <person name="Braus G."/>
            <person name="Coutinho P."/>
            <person name="von Dohren H."/>
            <person name="Doonan J."/>
            <person name="Driessen A.J."/>
            <person name="Durek P."/>
            <person name="Espeso E."/>
            <person name="Fekete E."/>
            <person name="Flipphi M."/>
            <person name="Estrada C.G."/>
            <person name="Geysens S."/>
            <person name="Goldman G."/>
            <person name="de Groot P.W."/>
            <person name="Hansen K."/>
            <person name="Harris S.D."/>
            <person name="Heinekamp T."/>
            <person name="Helmstaedt K."/>
            <person name="Henrissat B."/>
            <person name="Hofmann G."/>
            <person name="Homan T."/>
            <person name="Horio T."/>
            <person name="Horiuchi H."/>
            <person name="James S."/>
            <person name="Jones M."/>
            <person name="Karaffa L."/>
            <person name="Karanyi Z."/>
            <person name="Kato M."/>
            <person name="Keller N."/>
            <person name="Kelly D.E."/>
            <person name="Kiel J.A."/>
            <person name="Kim J.M."/>
            <person name="van der Klei I.J."/>
            <person name="Klis F.M."/>
            <person name="Kovalchuk A."/>
            <person name="Krasevec N."/>
            <person name="Kubicek C.P."/>
            <person name="Liu B."/>
            <person name="Maccabe A."/>
            <person name="Meyer V."/>
            <person name="Mirabito P."/>
            <person name="Miskei M."/>
            <person name="Mos M."/>
            <person name="Mullins J."/>
            <person name="Nelson D.R."/>
            <person name="Nielsen J."/>
            <person name="Oakley B.R."/>
            <person name="Osmani S.A."/>
            <person name="Pakula T."/>
            <person name="Paszewski A."/>
            <person name="Paulsen I."/>
            <person name="Pilsyk S."/>
            <person name="Pocsi I."/>
            <person name="Punt P.J."/>
            <person name="Ram A.F."/>
            <person name="Ren Q."/>
            <person name="Robellet X."/>
            <person name="Robson G."/>
            <person name="Seiboth B."/>
            <person name="van Solingen P."/>
            <person name="Specht T."/>
            <person name="Sun J."/>
            <person name="Taheri-Talesh N."/>
            <person name="Takeshita N."/>
            <person name="Ussery D."/>
            <person name="vanKuyk P.A."/>
            <person name="Visser H."/>
            <person name="van de Vondervoort P.J."/>
            <person name="de Vries R.P."/>
            <person name="Walton J."/>
            <person name="Xiang X."/>
            <person name="Xiong Y."/>
            <person name="Zeng A.P."/>
            <person name="Brandt B.W."/>
            <person name="Cornell M.J."/>
            <person name="van den Hondel C.A."/>
            <person name="Visser J."/>
            <person name="Oliver S.G."/>
            <person name="Turner G."/>
        </authorList>
    </citation>
    <scope>GENOME REANNOTATION</scope>
    <source>
        <strain>FGSC A4 / ATCC 38163 / CBS 112.46 / NRRL 194 / M139</strain>
    </source>
</reference>
<keyword id="KW-0031">Aminopeptidase</keyword>
<keyword id="KW-0963">Cytoplasm</keyword>
<keyword id="KW-0378">Hydrolase</keyword>
<keyword id="KW-0479">Metal-binding</keyword>
<keyword id="KW-0645">Protease</keyword>
<keyword id="KW-1185">Reference proteome</keyword>
<proteinExistence type="inferred from homology"/>
<organism>
    <name type="scientific">Emericella nidulans (strain FGSC A4 / ATCC 38163 / CBS 112.46 / NRRL 194 / M139)</name>
    <name type="common">Aspergillus nidulans</name>
    <dbReference type="NCBI Taxonomy" id="227321"/>
    <lineage>
        <taxon>Eukaryota</taxon>
        <taxon>Fungi</taxon>
        <taxon>Dikarya</taxon>
        <taxon>Ascomycota</taxon>
        <taxon>Pezizomycotina</taxon>
        <taxon>Eurotiomycetes</taxon>
        <taxon>Eurotiomycetidae</taxon>
        <taxon>Eurotiales</taxon>
        <taxon>Aspergillaceae</taxon>
        <taxon>Aspergillus</taxon>
        <taxon>Aspergillus subgen. Nidulantes</taxon>
    </lineage>
</organism>
<accession>Q5B4X6</accession>
<accession>C8V8T8</accession>
<feature type="chain" id="PRO_0000407606" description="Methionine aminopeptidase 2-1">
    <location>
        <begin position="1"/>
        <end position="448"/>
    </location>
</feature>
<feature type="region of interest" description="Disordered" evidence="2">
    <location>
        <begin position="1"/>
        <end position="90"/>
    </location>
</feature>
<feature type="compositionally biased region" description="Low complexity" evidence="2">
    <location>
        <begin position="22"/>
        <end position="33"/>
    </location>
</feature>
<feature type="compositionally biased region" description="Acidic residues" evidence="2">
    <location>
        <begin position="34"/>
        <end position="46"/>
    </location>
</feature>
<feature type="compositionally biased region" description="Low complexity" evidence="2">
    <location>
        <begin position="47"/>
        <end position="58"/>
    </location>
</feature>
<feature type="compositionally biased region" description="Basic residues" evidence="2">
    <location>
        <begin position="59"/>
        <end position="74"/>
    </location>
</feature>
<feature type="compositionally biased region" description="Low complexity" evidence="2">
    <location>
        <begin position="75"/>
        <end position="88"/>
    </location>
</feature>
<feature type="binding site" evidence="1">
    <location>
        <position position="198"/>
    </location>
    <ligand>
        <name>substrate</name>
    </ligand>
</feature>
<feature type="binding site" evidence="1">
    <location>
        <position position="218"/>
    </location>
    <ligand>
        <name>a divalent metal cation</name>
        <dbReference type="ChEBI" id="CHEBI:60240"/>
        <label>1</label>
    </ligand>
</feature>
<feature type="binding site" evidence="1">
    <location>
        <position position="229"/>
    </location>
    <ligand>
        <name>a divalent metal cation</name>
        <dbReference type="ChEBI" id="CHEBI:60240"/>
        <label>1</label>
    </ligand>
</feature>
<feature type="binding site" evidence="1">
    <location>
        <position position="229"/>
    </location>
    <ligand>
        <name>a divalent metal cation</name>
        <dbReference type="ChEBI" id="CHEBI:60240"/>
        <label>2</label>
        <note>catalytic</note>
    </ligand>
</feature>
<feature type="binding site" evidence="1">
    <location>
        <position position="301"/>
    </location>
    <ligand>
        <name>a divalent metal cation</name>
        <dbReference type="ChEBI" id="CHEBI:60240"/>
        <label>2</label>
        <note>catalytic</note>
    </ligand>
</feature>
<feature type="binding site" evidence="1">
    <location>
        <position position="309"/>
    </location>
    <ligand>
        <name>substrate</name>
    </ligand>
</feature>
<feature type="binding site" evidence="1">
    <location>
        <position position="334"/>
    </location>
    <ligand>
        <name>a divalent metal cation</name>
        <dbReference type="ChEBI" id="CHEBI:60240"/>
        <label>2</label>
        <note>catalytic</note>
    </ligand>
</feature>
<feature type="binding site" evidence="1">
    <location>
        <position position="429"/>
    </location>
    <ligand>
        <name>a divalent metal cation</name>
        <dbReference type="ChEBI" id="CHEBI:60240"/>
        <label>1</label>
    </ligand>
</feature>
<feature type="binding site" evidence="1">
    <location>
        <position position="429"/>
    </location>
    <ligand>
        <name>a divalent metal cation</name>
        <dbReference type="ChEBI" id="CHEBI:60240"/>
        <label>2</label>
        <note>catalytic</note>
    </ligand>
</feature>
<comment type="function">
    <text evidence="1">Cotranslationally removes the N-terminal methionine from nascent proteins. The N-terminal methionine is often cleaved when the second residue in the primary sequence is small and uncharged (Met-Ala-, Cys, Gly, Pro, Ser, Thr, or Val).</text>
</comment>
<comment type="catalytic activity">
    <reaction evidence="1">
        <text>Release of N-terminal amino acids, preferentially methionine, from peptides and arylamides.</text>
        <dbReference type="EC" id="3.4.11.18"/>
    </reaction>
</comment>
<comment type="cofactor">
    <cofactor evidence="1">
        <name>Co(2+)</name>
        <dbReference type="ChEBI" id="CHEBI:48828"/>
    </cofactor>
    <cofactor evidence="1">
        <name>Zn(2+)</name>
        <dbReference type="ChEBI" id="CHEBI:29105"/>
    </cofactor>
    <cofactor evidence="1">
        <name>Mn(2+)</name>
        <dbReference type="ChEBI" id="CHEBI:29035"/>
    </cofactor>
    <cofactor evidence="1">
        <name>Fe(2+)</name>
        <dbReference type="ChEBI" id="CHEBI:29033"/>
    </cofactor>
    <text evidence="1">Binds 2 divalent metal cations per subunit. Has a high-affinity and a low affinity metal-binding site. The true nature of the physiological cofactor is under debate. The enzyme is active with cobalt, zinc, manganese or divalent iron ions. Most likely, methionine aminopeptidases function as mononuclear Fe(2+)-metalloproteases under physiological conditions, and the catalytically relevant metal-binding site has been assigned to the histidine-containing high-affinity site.</text>
</comment>
<comment type="subcellular location">
    <subcellularLocation>
        <location evidence="1">Cytoplasm</location>
    </subcellularLocation>
</comment>
<comment type="similarity">
    <text evidence="1">Belongs to the peptidase M24A family. Methionine aminopeptidase eukaryotic type 2 subfamily.</text>
</comment>
<evidence type="ECO:0000255" key="1">
    <source>
        <dbReference type="HAMAP-Rule" id="MF_03175"/>
    </source>
</evidence>
<evidence type="ECO:0000256" key="2">
    <source>
        <dbReference type="SAM" id="MobiDB-lite"/>
    </source>
</evidence>